<evidence type="ECO:0000255" key="1">
    <source>
        <dbReference type="HAMAP-Rule" id="MF_00571"/>
    </source>
</evidence>
<sequence length="496" mass="57233">MLLNQQLVQQFVTQAIAFGDYEQEDNIYIQNQLLRILNAIGIDVDNESPLNQDATANAIAQYWIEQAVNENYLEDALYKKEIVEAQILDLITPRPSVINRNFVEAYKKSPETATNYFYEITKRNHYVKEDAIANNINYEVETEYGDIEITINLSKPEKDAKQIAKAKAEPAKHYPKCALCIENEGYQGSVTQAARTNHRIIRLKLDGKSWGFQYSPYAYFPEHSIVLSEHHVPMEINKQTFVNLLAFIEQFPHYFIGSNADIPLVGGSILSHNHYQAGKHVFPMDNAAEIERFTMNQFSSVTASTLNWPMSVIRLKSENRDELINAATYVMNTWNQYSDETIDVRAFSKDGERHHTVTPIARYRQSQYELDIVLRDNQTSEVFPDGIFHPHEDVQHIKKENIGLIEVMGTAILPGRLKEELQQVKTYLVGDNQFDLGIHQQWAENMKRTYDINKQNVDDIVDKEVGYKFKRVLEDAGVFKNTDTGRQAFKRFIKHL</sequence>
<dbReference type="EC" id="2.7.7.12" evidence="1"/>
<dbReference type="EMBL" id="AP008934">
    <property type="protein sequence ID" value="BAE17776.1"/>
    <property type="molecule type" value="Genomic_DNA"/>
</dbReference>
<dbReference type="RefSeq" id="WP_011302571.1">
    <property type="nucleotide sequence ID" value="NC_007350.1"/>
</dbReference>
<dbReference type="GeneID" id="3616027"/>
<dbReference type="KEGG" id="ssp:SSP0631"/>
<dbReference type="PATRIC" id="fig|342451.11.peg.634"/>
<dbReference type="eggNOG" id="COG4468">
    <property type="taxonomic scope" value="Bacteria"/>
</dbReference>
<dbReference type="HOGENOM" id="CLU_047799_0_0_9"/>
<dbReference type="OrthoDB" id="2293at2"/>
<dbReference type="UniPathway" id="UPA00214"/>
<dbReference type="Proteomes" id="UP000006371">
    <property type="component" value="Chromosome"/>
</dbReference>
<dbReference type="GO" id="GO:0005737">
    <property type="term" value="C:cytoplasm"/>
    <property type="evidence" value="ECO:0007669"/>
    <property type="project" value="UniProtKB-SubCell"/>
</dbReference>
<dbReference type="GO" id="GO:0008108">
    <property type="term" value="F:UDP-glucose:hexose-1-phosphate uridylyltransferase activity"/>
    <property type="evidence" value="ECO:0007669"/>
    <property type="project" value="UniProtKB-UniRule"/>
</dbReference>
<dbReference type="GO" id="GO:0006012">
    <property type="term" value="P:galactose metabolic process"/>
    <property type="evidence" value="ECO:0007669"/>
    <property type="project" value="UniProtKB-UniRule"/>
</dbReference>
<dbReference type="HAMAP" id="MF_00571">
    <property type="entry name" value="GalP_UDP_trans"/>
    <property type="match status" value="1"/>
</dbReference>
<dbReference type="InterPro" id="IPR000766">
    <property type="entry name" value="GalP_uridyl_Trfase_II"/>
</dbReference>
<dbReference type="InterPro" id="IPR005850">
    <property type="entry name" value="GalP_Utransf_C"/>
</dbReference>
<dbReference type="InterPro" id="IPR005849">
    <property type="entry name" value="GalP_Utransf_N"/>
</dbReference>
<dbReference type="NCBIfam" id="TIGR01239">
    <property type="entry name" value="galT_2"/>
    <property type="match status" value="1"/>
</dbReference>
<dbReference type="NCBIfam" id="NF003629">
    <property type="entry name" value="PRK05270.1-2"/>
    <property type="match status" value="1"/>
</dbReference>
<dbReference type="NCBIfam" id="NF003633">
    <property type="entry name" value="PRK05270.2-2"/>
    <property type="match status" value="1"/>
</dbReference>
<dbReference type="PANTHER" id="PTHR39191:SF1">
    <property type="entry name" value="DUF4922 DOMAIN-CONTAINING PROTEIN"/>
    <property type="match status" value="1"/>
</dbReference>
<dbReference type="PANTHER" id="PTHR39191">
    <property type="entry name" value="GALACTOSE-1-PHOSPHATE URIDYLYLTRANSFERASE"/>
    <property type="match status" value="1"/>
</dbReference>
<dbReference type="Pfam" id="PF02744">
    <property type="entry name" value="GalP_UDP_tr_C"/>
    <property type="match status" value="1"/>
</dbReference>
<dbReference type="Pfam" id="PF01087">
    <property type="entry name" value="GalP_UDP_transf"/>
    <property type="match status" value="1"/>
</dbReference>
<dbReference type="PIRSF" id="PIRSF006005">
    <property type="entry name" value="GalT_BS"/>
    <property type="match status" value="1"/>
</dbReference>
<keyword id="KW-0119">Carbohydrate metabolism</keyword>
<keyword id="KW-0963">Cytoplasm</keyword>
<keyword id="KW-0299">Galactose metabolism</keyword>
<keyword id="KW-0548">Nucleotidyltransferase</keyword>
<keyword id="KW-1185">Reference proteome</keyword>
<keyword id="KW-0808">Transferase</keyword>
<organism>
    <name type="scientific">Staphylococcus saprophyticus subsp. saprophyticus (strain ATCC 15305 / DSM 20229 / NCIMB 8711 / NCTC 7292 / S-41)</name>
    <dbReference type="NCBI Taxonomy" id="342451"/>
    <lineage>
        <taxon>Bacteria</taxon>
        <taxon>Bacillati</taxon>
        <taxon>Bacillota</taxon>
        <taxon>Bacilli</taxon>
        <taxon>Bacillales</taxon>
        <taxon>Staphylococcaceae</taxon>
        <taxon>Staphylococcus</taxon>
    </lineage>
</organism>
<reference key="1">
    <citation type="journal article" date="2005" name="Proc. Natl. Acad. Sci. U.S.A.">
        <title>Whole genome sequence of Staphylococcus saprophyticus reveals the pathogenesis of uncomplicated urinary tract infection.</title>
        <authorList>
            <person name="Kuroda M."/>
            <person name="Yamashita A."/>
            <person name="Hirakawa H."/>
            <person name="Kumano M."/>
            <person name="Morikawa K."/>
            <person name="Higashide M."/>
            <person name="Maruyama A."/>
            <person name="Inose Y."/>
            <person name="Matoba K."/>
            <person name="Toh H."/>
            <person name="Kuhara S."/>
            <person name="Hattori M."/>
            <person name="Ohta T."/>
        </authorList>
    </citation>
    <scope>NUCLEOTIDE SEQUENCE [LARGE SCALE GENOMIC DNA]</scope>
    <source>
        <strain>ATCC 15305 / DSM 20229 / NCIMB 8711 / NCTC 7292 / S-41</strain>
    </source>
</reference>
<gene>
    <name evidence="1" type="primary">galT</name>
    <name type="ordered locus">SSP0631</name>
</gene>
<proteinExistence type="inferred from homology"/>
<accession>Q49ZK0</accession>
<feature type="chain" id="PRO_1000025027" description="Galactose-1-phosphate uridylyltransferase">
    <location>
        <begin position="1"/>
        <end position="496"/>
    </location>
</feature>
<comment type="catalytic activity">
    <reaction evidence="1">
        <text>alpha-D-galactose 1-phosphate + UDP-alpha-D-glucose = alpha-D-glucose 1-phosphate + UDP-alpha-D-galactose</text>
        <dbReference type="Rhea" id="RHEA:13989"/>
        <dbReference type="ChEBI" id="CHEBI:58336"/>
        <dbReference type="ChEBI" id="CHEBI:58601"/>
        <dbReference type="ChEBI" id="CHEBI:58885"/>
        <dbReference type="ChEBI" id="CHEBI:66914"/>
        <dbReference type="EC" id="2.7.7.12"/>
    </reaction>
</comment>
<comment type="pathway">
    <text evidence="1">Carbohydrate metabolism; galactose metabolism.</text>
</comment>
<comment type="subcellular location">
    <subcellularLocation>
        <location evidence="1">Cytoplasm</location>
    </subcellularLocation>
</comment>
<comment type="similarity">
    <text evidence="1">Belongs to the galactose-1-phosphate uridylyltransferase type 2 family.</text>
</comment>
<name>GALT_STAS1</name>
<protein>
    <recommendedName>
        <fullName evidence="1">Galactose-1-phosphate uridylyltransferase</fullName>
        <shortName evidence="1">Gal-1-P uridylyltransferase</shortName>
        <ecNumber evidence="1">2.7.7.12</ecNumber>
    </recommendedName>
    <alternativeName>
        <fullName evidence="1">UDP-glucose--hexose-1-phosphate uridylyltransferase</fullName>
    </alternativeName>
</protein>